<gene>
    <name evidence="1" type="primary">rpsD</name>
    <name type="ordered locus">VS_2808</name>
</gene>
<sequence>MARYLGPKLKLSRREGTDLFLKSGVRAIDTKCKIDNAPGVHGARRGRLSEYGVQLREKQKVRRIYGVLEKQFRNYYKEAARLKGNTGANLLQLLEGRLDNVVYRMGFGATRAESRQLVSHKSILVNGKVVNVPSFKVAANDVVSIREKAKQQSRIKAALEVAEQREKPTWIEVDAGKMEGTFKRMPERSDLSADINEHLIVELYSK</sequence>
<name>RS4_VIBA3</name>
<reference key="1">
    <citation type="submission" date="2009-02" db="EMBL/GenBank/DDBJ databases">
        <title>Vibrio splendidus str. LGP32 complete genome.</title>
        <authorList>
            <person name="Mazel D."/>
            <person name="Le Roux F."/>
        </authorList>
    </citation>
    <scope>NUCLEOTIDE SEQUENCE [LARGE SCALE GENOMIC DNA]</scope>
    <source>
        <strain>LGP32</strain>
    </source>
</reference>
<proteinExistence type="inferred from homology"/>
<evidence type="ECO:0000255" key="1">
    <source>
        <dbReference type="HAMAP-Rule" id="MF_01306"/>
    </source>
</evidence>
<evidence type="ECO:0000305" key="2"/>
<organism>
    <name type="scientific">Vibrio atlanticus (strain LGP32)</name>
    <name type="common">Vibrio splendidus (strain Mel32)</name>
    <dbReference type="NCBI Taxonomy" id="575788"/>
    <lineage>
        <taxon>Bacteria</taxon>
        <taxon>Pseudomonadati</taxon>
        <taxon>Pseudomonadota</taxon>
        <taxon>Gammaproteobacteria</taxon>
        <taxon>Vibrionales</taxon>
        <taxon>Vibrionaceae</taxon>
        <taxon>Vibrio</taxon>
    </lineage>
</organism>
<protein>
    <recommendedName>
        <fullName evidence="1">Small ribosomal subunit protein uS4</fullName>
    </recommendedName>
    <alternativeName>
        <fullName evidence="2">30S ribosomal protein S4</fullName>
    </alternativeName>
</protein>
<dbReference type="EMBL" id="FM954972">
    <property type="protein sequence ID" value="CAV20098.1"/>
    <property type="molecule type" value="Genomic_DNA"/>
</dbReference>
<dbReference type="SMR" id="B7VLD3"/>
<dbReference type="STRING" id="575788.VS_2808"/>
<dbReference type="KEGG" id="vsp:VS_2808"/>
<dbReference type="eggNOG" id="COG0522">
    <property type="taxonomic scope" value="Bacteria"/>
</dbReference>
<dbReference type="HOGENOM" id="CLU_092403_0_2_6"/>
<dbReference type="Proteomes" id="UP000009100">
    <property type="component" value="Chromosome 1"/>
</dbReference>
<dbReference type="GO" id="GO:0015935">
    <property type="term" value="C:small ribosomal subunit"/>
    <property type="evidence" value="ECO:0007669"/>
    <property type="project" value="InterPro"/>
</dbReference>
<dbReference type="GO" id="GO:0019843">
    <property type="term" value="F:rRNA binding"/>
    <property type="evidence" value="ECO:0007669"/>
    <property type="project" value="UniProtKB-UniRule"/>
</dbReference>
<dbReference type="GO" id="GO:0003735">
    <property type="term" value="F:structural constituent of ribosome"/>
    <property type="evidence" value="ECO:0007669"/>
    <property type="project" value="InterPro"/>
</dbReference>
<dbReference type="GO" id="GO:0042274">
    <property type="term" value="P:ribosomal small subunit biogenesis"/>
    <property type="evidence" value="ECO:0007669"/>
    <property type="project" value="TreeGrafter"/>
</dbReference>
<dbReference type="GO" id="GO:0006412">
    <property type="term" value="P:translation"/>
    <property type="evidence" value="ECO:0007669"/>
    <property type="project" value="UniProtKB-UniRule"/>
</dbReference>
<dbReference type="CDD" id="cd00165">
    <property type="entry name" value="S4"/>
    <property type="match status" value="1"/>
</dbReference>
<dbReference type="FunFam" id="1.10.1050.10:FF:000001">
    <property type="entry name" value="30S ribosomal protein S4"/>
    <property type="match status" value="1"/>
</dbReference>
<dbReference type="FunFam" id="3.10.290.10:FF:000001">
    <property type="entry name" value="30S ribosomal protein S4"/>
    <property type="match status" value="1"/>
</dbReference>
<dbReference type="Gene3D" id="1.10.1050.10">
    <property type="entry name" value="Ribosomal Protein S4 Delta 41, Chain A, domain 1"/>
    <property type="match status" value="1"/>
</dbReference>
<dbReference type="Gene3D" id="3.10.290.10">
    <property type="entry name" value="RNA-binding S4 domain"/>
    <property type="match status" value="1"/>
</dbReference>
<dbReference type="HAMAP" id="MF_01306_B">
    <property type="entry name" value="Ribosomal_uS4_B"/>
    <property type="match status" value="1"/>
</dbReference>
<dbReference type="InterPro" id="IPR022801">
    <property type="entry name" value="Ribosomal_uS4"/>
</dbReference>
<dbReference type="InterPro" id="IPR005709">
    <property type="entry name" value="Ribosomal_uS4_bac-type"/>
</dbReference>
<dbReference type="InterPro" id="IPR018079">
    <property type="entry name" value="Ribosomal_uS4_CS"/>
</dbReference>
<dbReference type="InterPro" id="IPR001912">
    <property type="entry name" value="Ribosomal_uS4_N"/>
</dbReference>
<dbReference type="InterPro" id="IPR002942">
    <property type="entry name" value="S4_RNA-bd"/>
</dbReference>
<dbReference type="InterPro" id="IPR036986">
    <property type="entry name" value="S4_RNA-bd_sf"/>
</dbReference>
<dbReference type="NCBIfam" id="NF003717">
    <property type="entry name" value="PRK05327.1"/>
    <property type="match status" value="1"/>
</dbReference>
<dbReference type="NCBIfam" id="TIGR01017">
    <property type="entry name" value="rpsD_bact"/>
    <property type="match status" value="1"/>
</dbReference>
<dbReference type="PANTHER" id="PTHR11831">
    <property type="entry name" value="30S 40S RIBOSOMAL PROTEIN"/>
    <property type="match status" value="1"/>
</dbReference>
<dbReference type="PANTHER" id="PTHR11831:SF4">
    <property type="entry name" value="SMALL RIBOSOMAL SUBUNIT PROTEIN US4M"/>
    <property type="match status" value="1"/>
</dbReference>
<dbReference type="Pfam" id="PF00163">
    <property type="entry name" value="Ribosomal_S4"/>
    <property type="match status" value="1"/>
</dbReference>
<dbReference type="Pfam" id="PF01479">
    <property type="entry name" value="S4"/>
    <property type="match status" value="1"/>
</dbReference>
<dbReference type="SMART" id="SM01390">
    <property type="entry name" value="Ribosomal_S4"/>
    <property type="match status" value="1"/>
</dbReference>
<dbReference type="SMART" id="SM00363">
    <property type="entry name" value="S4"/>
    <property type="match status" value="1"/>
</dbReference>
<dbReference type="SUPFAM" id="SSF55174">
    <property type="entry name" value="Alpha-L RNA-binding motif"/>
    <property type="match status" value="1"/>
</dbReference>
<dbReference type="PROSITE" id="PS00632">
    <property type="entry name" value="RIBOSOMAL_S4"/>
    <property type="match status" value="1"/>
</dbReference>
<dbReference type="PROSITE" id="PS50889">
    <property type="entry name" value="S4"/>
    <property type="match status" value="1"/>
</dbReference>
<accession>B7VLD3</accession>
<feature type="chain" id="PRO_1000165436" description="Small ribosomal subunit protein uS4">
    <location>
        <begin position="1"/>
        <end position="206"/>
    </location>
</feature>
<feature type="domain" description="S4 RNA-binding" evidence="1">
    <location>
        <begin position="96"/>
        <end position="158"/>
    </location>
</feature>
<comment type="function">
    <text evidence="1">One of the primary rRNA binding proteins, it binds directly to 16S rRNA where it nucleates assembly of the body of the 30S subunit.</text>
</comment>
<comment type="function">
    <text evidence="1">With S5 and S12 plays an important role in translational accuracy.</text>
</comment>
<comment type="subunit">
    <text evidence="1">Part of the 30S ribosomal subunit. Contacts protein S5. The interaction surface between S4 and S5 is involved in control of translational fidelity.</text>
</comment>
<comment type="similarity">
    <text evidence="1">Belongs to the universal ribosomal protein uS4 family.</text>
</comment>
<keyword id="KW-0687">Ribonucleoprotein</keyword>
<keyword id="KW-0689">Ribosomal protein</keyword>
<keyword id="KW-0694">RNA-binding</keyword>
<keyword id="KW-0699">rRNA-binding</keyword>